<protein>
    <recommendedName>
        <fullName evidence="1">Porphobilinogen deaminase</fullName>
        <shortName evidence="1">PBG</shortName>
        <ecNumber evidence="1">2.5.1.61</ecNumber>
    </recommendedName>
    <alternativeName>
        <fullName evidence="1">Hydroxymethylbilane synthase</fullName>
        <shortName evidence="1">HMBS</shortName>
    </alternativeName>
    <alternativeName>
        <fullName evidence="1">Pre-uroporphyrinogen synthase</fullName>
    </alternativeName>
</protein>
<accession>A6Q3S1</accession>
<sequence>MKLTIATRGSKLALWQSNHIKAQLESFGYEVELKIFKTKGDKILDTPLALIGGKGLFTKELEDAMLRGEADLAVHSLKDVPTELPEGLVLGAITKREMTNDSLLSEQYETLADLPPNAVVGTTSLRRRMQLLHLRPDICIKDLRGNVDTRINKLKNGEFDAIILAYAGLKRLGILESVRYVHPIDENTMIPAMGQAALGIECRPDVVDVVKKLNDEKSAIETFIERDFIDRLQGGCQVPIGVRASLLENNDIIVKAVIGLPDGSELLKDKIFGSKENYHELGKELAESMIDNGAKELLQRAEAMAFKEHK</sequence>
<name>HEM3_NITSB</name>
<feature type="chain" id="PRO_1000047754" description="Porphobilinogen deaminase">
    <location>
        <begin position="1"/>
        <end position="310"/>
    </location>
</feature>
<feature type="modified residue" description="S-(dipyrrolylmethanemethyl)cysteine" evidence="1">
    <location>
        <position position="236"/>
    </location>
</feature>
<reference key="1">
    <citation type="journal article" date="2007" name="Proc. Natl. Acad. Sci. U.S.A.">
        <title>Deep-sea vent epsilon-proteobacterial genomes provide insights into emergence of pathogens.</title>
        <authorList>
            <person name="Nakagawa S."/>
            <person name="Takaki Y."/>
            <person name="Shimamura S."/>
            <person name="Reysenbach A.-L."/>
            <person name="Takai K."/>
            <person name="Horikoshi K."/>
        </authorList>
    </citation>
    <scope>NUCLEOTIDE SEQUENCE [LARGE SCALE GENOMIC DNA]</scope>
    <source>
        <strain>SB155-2</strain>
    </source>
</reference>
<organism>
    <name type="scientific">Nitratiruptor sp. (strain SB155-2)</name>
    <dbReference type="NCBI Taxonomy" id="387092"/>
    <lineage>
        <taxon>Bacteria</taxon>
        <taxon>Pseudomonadati</taxon>
        <taxon>Campylobacterota</taxon>
        <taxon>Epsilonproteobacteria</taxon>
        <taxon>Nautiliales</taxon>
        <taxon>Nitratiruptoraceae</taxon>
        <taxon>Nitratiruptor</taxon>
    </lineage>
</organism>
<keyword id="KW-0627">Porphyrin biosynthesis</keyword>
<keyword id="KW-1185">Reference proteome</keyword>
<keyword id="KW-0808">Transferase</keyword>
<dbReference type="EC" id="2.5.1.61" evidence="1"/>
<dbReference type="EMBL" id="AP009178">
    <property type="protein sequence ID" value="BAF70130.1"/>
    <property type="molecule type" value="Genomic_DNA"/>
</dbReference>
<dbReference type="SMR" id="A6Q3S1"/>
<dbReference type="FunCoup" id="A6Q3S1">
    <property type="interactions" value="457"/>
</dbReference>
<dbReference type="STRING" id="387092.NIS_1020"/>
<dbReference type="KEGG" id="nis:NIS_1020"/>
<dbReference type="eggNOG" id="COG0181">
    <property type="taxonomic scope" value="Bacteria"/>
</dbReference>
<dbReference type="HOGENOM" id="CLU_019704_0_2_7"/>
<dbReference type="InParanoid" id="A6Q3S1"/>
<dbReference type="UniPathway" id="UPA00251">
    <property type="reaction ID" value="UER00319"/>
</dbReference>
<dbReference type="Proteomes" id="UP000001118">
    <property type="component" value="Chromosome"/>
</dbReference>
<dbReference type="GO" id="GO:0005737">
    <property type="term" value="C:cytoplasm"/>
    <property type="evidence" value="ECO:0007669"/>
    <property type="project" value="TreeGrafter"/>
</dbReference>
<dbReference type="GO" id="GO:0004418">
    <property type="term" value="F:hydroxymethylbilane synthase activity"/>
    <property type="evidence" value="ECO:0007669"/>
    <property type="project" value="UniProtKB-UniRule"/>
</dbReference>
<dbReference type="GO" id="GO:0006782">
    <property type="term" value="P:protoporphyrinogen IX biosynthetic process"/>
    <property type="evidence" value="ECO:0007669"/>
    <property type="project" value="UniProtKB-UniRule"/>
</dbReference>
<dbReference type="CDD" id="cd13646">
    <property type="entry name" value="PBP2_EcHMBS_like"/>
    <property type="match status" value="1"/>
</dbReference>
<dbReference type="FunFam" id="3.40.190.10:FF:000004">
    <property type="entry name" value="Porphobilinogen deaminase"/>
    <property type="match status" value="1"/>
</dbReference>
<dbReference type="FunFam" id="3.40.190.10:FF:000005">
    <property type="entry name" value="Porphobilinogen deaminase"/>
    <property type="match status" value="1"/>
</dbReference>
<dbReference type="Gene3D" id="3.40.190.10">
    <property type="entry name" value="Periplasmic binding protein-like II"/>
    <property type="match status" value="2"/>
</dbReference>
<dbReference type="Gene3D" id="3.30.160.40">
    <property type="entry name" value="Porphobilinogen deaminase, C-terminal domain"/>
    <property type="match status" value="1"/>
</dbReference>
<dbReference type="HAMAP" id="MF_00260">
    <property type="entry name" value="Porphobil_deam"/>
    <property type="match status" value="1"/>
</dbReference>
<dbReference type="InterPro" id="IPR000860">
    <property type="entry name" value="HemC"/>
</dbReference>
<dbReference type="InterPro" id="IPR022419">
    <property type="entry name" value="Porphobilin_deaminase_cofac_BS"/>
</dbReference>
<dbReference type="InterPro" id="IPR022417">
    <property type="entry name" value="Porphobilin_deaminase_N"/>
</dbReference>
<dbReference type="InterPro" id="IPR022418">
    <property type="entry name" value="Porphobilinogen_deaminase_C"/>
</dbReference>
<dbReference type="InterPro" id="IPR036803">
    <property type="entry name" value="Porphobilinogen_deaminase_C_sf"/>
</dbReference>
<dbReference type="NCBIfam" id="TIGR00212">
    <property type="entry name" value="hemC"/>
    <property type="match status" value="1"/>
</dbReference>
<dbReference type="PANTHER" id="PTHR11557">
    <property type="entry name" value="PORPHOBILINOGEN DEAMINASE"/>
    <property type="match status" value="1"/>
</dbReference>
<dbReference type="PANTHER" id="PTHR11557:SF0">
    <property type="entry name" value="PORPHOBILINOGEN DEAMINASE"/>
    <property type="match status" value="1"/>
</dbReference>
<dbReference type="Pfam" id="PF01379">
    <property type="entry name" value="Porphobil_deam"/>
    <property type="match status" value="1"/>
</dbReference>
<dbReference type="Pfam" id="PF03900">
    <property type="entry name" value="Porphobil_deamC"/>
    <property type="match status" value="1"/>
</dbReference>
<dbReference type="PIRSF" id="PIRSF001438">
    <property type="entry name" value="4pyrrol_synth_OHMeBilane_synth"/>
    <property type="match status" value="1"/>
</dbReference>
<dbReference type="PRINTS" id="PR00151">
    <property type="entry name" value="PORPHBDMNASE"/>
</dbReference>
<dbReference type="SUPFAM" id="SSF53850">
    <property type="entry name" value="Periplasmic binding protein-like II"/>
    <property type="match status" value="1"/>
</dbReference>
<dbReference type="SUPFAM" id="SSF54782">
    <property type="entry name" value="Porphobilinogen deaminase (hydroxymethylbilane synthase), C-terminal domain"/>
    <property type="match status" value="1"/>
</dbReference>
<dbReference type="PROSITE" id="PS00533">
    <property type="entry name" value="PORPHOBILINOGEN_DEAM"/>
    <property type="match status" value="1"/>
</dbReference>
<gene>
    <name evidence="1" type="primary">hemC</name>
    <name type="ordered locus">NIS_1020</name>
</gene>
<evidence type="ECO:0000255" key="1">
    <source>
        <dbReference type="HAMAP-Rule" id="MF_00260"/>
    </source>
</evidence>
<proteinExistence type="inferred from homology"/>
<comment type="function">
    <text evidence="1">Tetrapolymerization of the monopyrrole PBG into the hydroxymethylbilane pre-uroporphyrinogen in several discrete steps.</text>
</comment>
<comment type="catalytic activity">
    <reaction evidence="1">
        <text>4 porphobilinogen + H2O = hydroxymethylbilane + 4 NH4(+)</text>
        <dbReference type="Rhea" id="RHEA:13185"/>
        <dbReference type="ChEBI" id="CHEBI:15377"/>
        <dbReference type="ChEBI" id="CHEBI:28938"/>
        <dbReference type="ChEBI" id="CHEBI:57845"/>
        <dbReference type="ChEBI" id="CHEBI:58126"/>
        <dbReference type="EC" id="2.5.1.61"/>
    </reaction>
</comment>
<comment type="cofactor">
    <cofactor evidence="1">
        <name>dipyrromethane</name>
        <dbReference type="ChEBI" id="CHEBI:60342"/>
    </cofactor>
    <text evidence="1">Binds 1 dipyrromethane group covalently.</text>
</comment>
<comment type="pathway">
    <text evidence="1">Porphyrin-containing compound metabolism; protoporphyrin-IX biosynthesis; coproporphyrinogen-III from 5-aminolevulinate: step 2/4.</text>
</comment>
<comment type="subunit">
    <text evidence="1">Monomer.</text>
</comment>
<comment type="miscellaneous">
    <text evidence="1">The porphobilinogen subunits are added to the dipyrromethane group.</text>
</comment>
<comment type="similarity">
    <text evidence="1">Belongs to the HMBS family.</text>
</comment>